<comment type="function">
    <text evidence="1">Catalyzes the conversion of 3-deoxy-D-arabino-heptulosonate 7-phosphate (DAHP) to dehydroquinate (DHQ).</text>
</comment>
<comment type="catalytic activity">
    <reaction evidence="1">
        <text>7-phospho-2-dehydro-3-deoxy-D-arabino-heptonate = 3-dehydroquinate + phosphate</text>
        <dbReference type="Rhea" id="RHEA:21968"/>
        <dbReference type="ChEBI" id="CHEBI:32364"/>
        <dbReference type="ChEBI" id="CHEBI:43474"/>
        <dbReference type="ChEBI" id="CHEBI:58394"/>
        <dbReference type="EC" id="4.2.3.4"/>
    </reaction>
</comment>
<comment type="cofactor">
    <cofactor evidence="1">
        <name>Co(2+)</name>
        <dbReference type="ChEBI" id="CHEBI:48828"/>
    </cofactor>
    <cofactor evidence="1">
        <name>Zn(2+)</name>
        <dbReference type="ChEBI" id="CHEBI:29105"/>
    </cofactor>
    <text evidence="1">Binds 1 divalent metal cation per subunit. Can use either Co(2+) or Zn(2+).</text>
</comment>
<comment type="cofactor">
    <cofactor evidence="1">
        <name>NAD(+)</name>
        <dbReference type="ChEBI" id="CHEBI:57540"/>
    </cofactor>
</comment>
<comment type="pathway">
    <text evidence="1">Metabolic intermediate biosynthesis; chorismate biosynthesis; chorismate from D-erythrose 4-phosphate and phosphoenolpyruvate: step 2/7.</text>
</comment>
<comment type="subcellular location">
    <subcellularLocation>
        <location evidence="1">Cytoplasm</location>
    </subcellularLocation>
</comment>
<comment type="similarity">
    <text evidence="1">Belongs to the sugar phosphate cyclases superfamily. Dehydroquinate synthase family.</text>
</comment>
<name>AROB_RHIE6</name>
<organism>
    <name type="scientific">Rhizobium etli (strain CIAT 652)</name>
    <dbReference type="NCBI Taxonomy" id="491916"/>
    <lineage>
        <taxon>Bacteria</taxon>
        <taxon>Pseudomonadati</taxon>
        <taxon>Pseudomonadota</taxon>
        <taxon>Alphaproteobacteria</taxon>
        <taxon>Hyphomicrobiales</taxon>
        <taxon>Rhizobiaceae</taxon>
        <taxon>Rhizobium/Agrobacterium group</taxon>
        <taxon>Rhizobium</taxon>
    </lineage>
</organism>
<accession>B3PPF1</accession>
<sequence length="376" mass="39751">MNAITSAPAAQTVHVPLGERAYDILIGPGLIARAGAEIASRLKGRKAAIITDENVAPLYLDALVASLDAAGIASAAVVLPAGEKTKSFEHLMTACDKVLEARVERNGCVIALGGGVIGDLSGFAAGIVRRGVRFVQVPTSLLAQVDSSVGGKTGINSRHGKNLIGVFHQPDLVLADTDVLNSLSEREFRAGYAEVAKYGLIDKPDFFAWLEANWKAVFTGGAARIEAIATSCQAKADVVVADERENGQRALLNLGHTFGHALEAATAYDSRRLVHGEGVSIGMVLAHEFSARMNLASPDDARRVERHLQAVGLPTRMAEIPGELPPAEVLMDAIAQDKKVKGGKLTFILTRGIGQSFVADDVPASEVISFLREKHP</sequence>
<reference key="1">
    <citation type="journal article" date="2010" name="Appl. Environ. Microbiol.">
        <title>Conserved symbiotic plasmid DNA sequences in the multireplicon pangenomic structure of Rhizobium etli.</title>
        <authorList>
            <person name="Gonzalez V."/>
            <person name="Acosta J.L."/>
            <person name="Santamaria R.I."/>
            <person name="Bustos P."/>
            <person name="Fernandez J.L."/>
            <person name="Hernandez Gonzalez I.L."/>
            <person name="Diaz R."/>
            <person name="Flores M."/>
            <person name="Palacios R."/>
            <person name="Mora J."/>
            <person name="Davila G."/>
        </authorList>
    </citation>
    <scope>NUCLEOTIDE SEQUENCE [LARGE SCALE GENOMIC DNA]</scope>
    <source>
        <strain>CIAT 652</strain>
    </source>
</reference>
<dbReference type="EC" id="4.2.3.4" evidence="1"/>
<dbReference type="EMBL" id="CP001074">
    <property type="protein sequence ID" value="ACE93026.1"/>
    <property type="molecule type" value="Genomic_DNA"/>
</dbReference>
<dbReference type="SMR" id="B3PPF1"/>
<dbReference type="KEGG" id="rec:RHECIAT_CH0004096"/>
<dbReference type="eggNOG" id="COG0337">
    <property type="taxonomic scope" value="Bacteria"/>
</dbReference>
<dbReference type="HOGENOM" id="CLU_001201_0_2_5"/>
<dbReference type="UniPathway" id="UPA00053">
    <property type="reaction ID" value="UER00085"/>
</dbReference>
<dbReference type="Proteomes" id="UP000008817">
    <property type="component" value="Chromosome"/>
</dbReference>
<dbReference type="GO" id="GO:0005737">
    <property type="term" value="C:cytoplasm"/>
    <property type="evidence" value="ECO:0007669"/>
    <property type="project" value="UniProtKB-SubCell"/>
</dbReference>
<dbReference type="GO" id="GO:0003856">
    <property type="term" value="F:3-dehydroquinate synthase activity"/>
    <property type="evidence" value="ECO:0007669"/>
    <property type="project" value="UniProtKB-UniRule"/>
</dbReference>
<dbReference type="GO" id="GO:0046872">
    <property type="term" value="F:metal ion binding"/>
    <property type="evidence" value="ECO:0007669"/>
    <property type="project" value="UniProtKB-KW"/>
</dbReference>
<dbReference type="GO" id="GO:0000166">
    <property type="term" value="F:nucleotide binding"/>
    <property type="evidence" value="ECO:0007669"/>
    <property type="project" value="UniProtKB-KW"/>
</dbReference>
<dbReference type="GO" id="GO:0008652">
    <property type="term" value="P:amino acid biosynthetic process"/>
    <property type="evidence" value="ECO:0007669"/>
    <property type="project" value="UniProtKB-KW"/>
</dbReference>
<dbReference type="GO" id="GO:0009073">
    <property type="term" value="P:aromatic amino acid family biosynthetic process"/>
    <property type="evidence" value="ECO:0007669"/>
    <property type="project" value="UniProtKB-KW"/>
</dbReference>
<dbReference type="GO" id="GO:0009423">
    <property type="term" value="P:chorismate biosynthetic process"/>
    <property type="evidence" value="ECO:0007669"/>
    <property type="project" value="UniProtKB-UniRule"/>
</dbReference>
<dbReference type="CDD" id="cd08195">
    <property type="entry name" value="DHQS"/>
    <property type="match status" value="1"/>
</dbReference>
<dbReference type="FunFam" id="3.40.50.1970:FF:000001">
    <property type="entry name" value="3-dehydroquinate synthase"/>
    <property type="match status" value="1"/>
</dbReference>
<dbReference type="Gene3D" id="3.40.50.1970">
    <property type="match status" value="1"/>
</dbReference>
<dbReference type="Gene3D" id="1.20.1090.10">
    <property type="entry name" value="Dehydroquinate synthase-like - alpha domain"/>
    <property type="match status" value="1"/>
</dbReference>
<dbReference type="HAMAP" id="MF_00110">
    <property type="entry name" value="DHQ_synthase"/>
    <property type="match status" value="1"/>
</dbReference>
<dbReference type="InterPro" id="IPR050071">
    <property type="entry name" value="Dehydroquinate_synthase"/>
</dbReference>
<dbReference type="InterPro" id="IPR016037">
    <property type="entry name" value="DHQ_synth_AroB"/>
</dbReference>
<dbReference type="InterPro" id="IPR030963">
    <property type="entry name" value="DHQ_synth_fam"/>
</dbReference>
<dbReference type="InterPro" id="IPR030960">
    <property type="entry name" value="DHQS/DOIS_N"/>
</dbReference>
<dbReference type="InterPro" id="IPR056179">
    <property type="entry name" value="DHQS_C"/>
</dbReference>
<dbReference type="NCBIfam" id="TIGR01357">
    <property type="entry name" value="aroB"/>
    <property type="match status" value="1"/>
</dbReference>
<dbReference type="PANTHER" id="PTHR43622">
    <property type="entry name" value="3-DEHYDROQUINATE SYNTHASE"/>
    <property type="match status" value="1"/>
</dbReference>
<dbReference type="PANTHER" id="PTHR43622:SF7">
    <property type="entry name" value="3-DEHYDROQUINATE SYNTHASE, CHLOROPLASTIC"/>
    <property type="match status" value="1"/>
</dbReference>
<dbReference type="Pfam" id="PF01761">
    <property type="entry name" value="DHQ_synthase"/>
    <property type="match status" value="1"/>
</dbReference>
<dbReference type="Pfam" id="PF24621">
    <property type="entry name" value="DHQS_C"/>
    <property type="match status" value="1"/>
</dbReference>
<dbReference type="PIRSF" id="PIRSF001455">
    <property type="entry name" value="DHQ_synth"/>
    <property type="match status" value="1"/>
</dbReference>
<dbReference type="SUPFAM" id="SSF56796">
    <property type="entry name" value="Dehydroquinate synthase-like"/>
    <property type="match status" value="1"/>
</dbReference>
<proteinExistence type="inferred from homology"/>
<evidence type="ECO:0000255" key="1">
    <source>
        <dbReference type="HAMAP-Rule" id="MF_00110"/>
    </source>
</evidence>
<feature type="chain" id="PRO_1000094581" description="3-dehydroquinate synthase">
    <location>
        <begin position="1"/>
        <end position="376"/>
    </location>
</feature>
<feature type="binding site" evidence="1">
    <location>
        <begin position="115"/>
        <end position="119"/>
    </location>
    <ligand>
        <name>NAD(+)</name>
        <dbReference type="ChEBI" id="CHEBI:57540"/>
    </ligand>
</feature>
<feature type="binding site" evidence="1">
    <location>
        <begin position="139"/>
        <end position="140"/>
    </location>
    <ligand>
        <name>NAD(+)</name>
        <dbReference type="ChEBI" id="CHEBI:57540"/>
    </ligand>
</feature>
<feature type="binding site" evidence="1">
    <location>
        <position position="152"/>
    </location>
    <ligand>
        <name>NAD(+)</name>
        <dbReference type="ChEBI" id="CHEBI:57540"/>
    </ligand>
</feature>
<feature type="binding site" evidence="1">
    <location>
        <position position="161"/>
    </location>
    <ligand>
        <name>NAD(+)</name>
        <dbReference type="ChEBI" id="CHEBI:57540"/>
    </ligand>
</feature>
<feature type="binding site" evidence="1">
    <location>
        <position position="194"/>
    </location>
    <ligand>
        <name>Zn(2+)</name>
        <dbReference type="ChEBI" id="CHEBI:29105"/>
    </ligand>
</feature>
<feature type="binding site" evidence="1">
    <location>
        <position position="256"/>
    </location>
    <ligand>
        <name>Zn(2+)</name>
        <dbReference type="ChEBI" id="CHEBI:29105"/>
    </ligand>
</feature>
<feature type="binding site" evidence="1">
    <location>
        <position position="275"/>
    </location>
    <ligand>
        <name>Zn(2+)</name>
        <dbReference type="ChEBI" id="CHEBI:29105"/>
    </ligand>
</feature>
<protein>
    <recommendedName>
        <fullName evidence="1">3-dehydroquinate synthase</fullName>
        <shortName evidence="1">DHQS</shortName>
        <ecNumber evidence="1">4.2.3.4</ecNumber>
    </recommendedName>
</protein>
<gene>
    <name evidence="1" type="primary">aroB</name>
    <name type="ordered locus">RHECIAT_CH0004096</name>
</gene>
<keyword id="KW-0028">Amino-acid biosynthesis</keyword>
<keyword id="KW-0057">Aromatic amino acid biosynthesis</keyword>
<keyword id="KW-0170">Cobalt</keyword>
<keyword id="KW-0963">Cytoplasm</keyword>
<keyword id="KW-0456">Lyase</keyword>
<keyword id="KW-0479">Metal-binding</keyword>
<keyword id="KW-0520">NAD</keyword>
<keyword id="KW-0547">Nucleotide-binding</keyword>
<keyword id="KW-0862">Zinc</keyword>